<comment type="function">
    <text evidence="1">UDP-glucuronosyltransferase (UGT) that catalyzes phase II biotransformation reactions in which lipophilic substrates are conjugated with glucuronic acid to increase the metabolite's water solubility, thereby facilitating excretion into either the urine or bile. Essential for the elimination and detoxification of drugs, xenobiotics and endogenous compounds. Catalyzes the glucuronidation of endogenous steroid hormones such as androgens (testosterones) and estrogens (estradiol and estriol). Contributes to bile acid (BA) detoxification by catalyzing the glucuronidation of BA substrates, which are natural detergents for dietary lipids absorption. Shows a high affinity to aliphatic odorants such as citronellol as well as olfactory tissue specificity, and therefore may be involved in olfaction.</text>
</comment>
<comment type="catalytic activity">
    <reaction evidence="1">
        <text>glucuronate acceptor + UDP-alpha-D-glucuronate = acceptor beta-D-glucuronoside + UDP + H(+)</text>
        <dbReference type="Rhea" id="RHEA:21032"/>
        <dbReference type="ChEBI" id="CHEBI:15378"/>
        <dbReference type="ChEBI" id="CHEBI:58052"/>
        <dbReference type="ChEBI" id="CHEBI:58223"/>
        <dbReference type="ChEBI" id="CHEBI:132367"/>
        <dbReference type="ChEBI" id="CHEBI:132368"/>
        <dbReference type="EC" id="2.4.1.17"/>
    </reaction>
    <physiologicalReaction direction="left-to-right" evidence="1">
        <dbReference type="Rhea" id="RHEA:21033"/>
    </physiologicalReaction>
</comment>
<comment type="catalytic activity">
    <reaction evidence="1">
        <text>16beta,17beta-estriol + UDP-alpha-D-glucuronate = 16beta,17beta-estriol 16-O-(beta-D-glucuronate) + UDP + H(+)</text>
        <dbReference type="Rhea" id="RHEA:52880"/>
        <dbReference type="ChEBI" id="CHEBI:15378"/>
        <dbReference type="ChEBI" id="CHEBI:58052"/>
        <dbReference type="ChEBI" id="CHEBI:58223"/>
        <dbReference type="ChEBI" id="CHEBI:87620"/>
        <dbReference type="ChEBI" id="CHEBI:136886"/>
    </reaction>
    <physiologicalReaction direction="left-to-right" evidence="1">
        <dbReference type="Rhea" id="RHEA:52881"/>
    </physiologicalReaction>
</comment>
<comment type="catalytic activity">
    <reaction evidence="1">
        <text>16alpha,17alpha-estriol + UDP-alpha-D-glucuronate = 16alpha,17alpha-estriol 16-O-(beta-D-glucuronate) + UDP + H(+)</text>
        <dbReference type="Rhea" id="RHEA:52920"/>
        <dbReference type="ChEBI" id="CHEBI:15378"/>
        <dbReference type="ChEBI" id="CHEBI:42156"/>
        <dbReference type="ChEBI" id="CHEBI:58052"/>
        <dbReference type="ChEBI" id="CHEBI:58223"/>
        <dbReference type="ChEBI" id="CHEBI:136884"/>
    </reaction>
    <physiologicalReaction direction="left-to-right" evidence="1">
        <dbReference type="Rhea" id="RHEA:52921"/>
    </physiologicalReaction>
</comment>
<comment type="catalytic activity">
    <reaction evidence="1">
        <text>17alpha-estradiol + UDP-alpha-D-glucuronate = 17alpha-estradiol 17-O-(beta-D-glucuronate) + UDP + H(+)</text>
        <dbReference type="Rhea" id="RHEA:52872"/>
        <dbReference type="ChEBI" id="CHEBI:15378"/>
        <dbReference type="ChEBI" id="CHEBI:17160"/>
        <dbReference type="ChEBI" id="CHEBI:58052"/>
        <dbReference type="ChEBI" id="CHEBI:58223"/>
        <dbReference type="ChEBI" id="CHEBI:136642"/>
    </reaction>
    <physiologicalReaction direction="left-to-right" evidence="1">
        <dbReference type="Rhea" id="RHEA:52873"/>
    </physiologicalReaction>
</comment>
<comment type="catalytic activity">
    <reaction evidence="1">
        <text>17alpha-estradiol + UDP-alpha-D-glucuronate = 17alpha-estradiol 3-O-(beta-D-glucuronate) + UDP + H(+)</text>
        <dbReference type="Rhea" id="RHEA:52868"/>
        <dbReference type="ChEBI" id="CHEBI:15378"/>
        <dbReference type="ChEBI" id="CHEBI:17160"/>
        <dbReference type="ChEBI" id="CHEBI:57529"/>
        <dbReference type="ChEBI" id="CHEBI:58052"/>
        <dbReference type="ChEBI" id="CHEBI:58223"/>
    </reaction>
    <physiologicalReaction direction="left-to-right" evidence="1">
        <dbReference type="Rhea" id="RHEA:52869"/>
    </physiologicalReaction>
</comment>
<comment type="catalytic activity">
    <reaction evidence="1">
        <text>17beta-estradiol + UDP-alpha-D-glucuronate = 17beta-estradiol 3-O-(beta-D-glucuronate) + UDP + H(+)</text>
        <dbReference type="Rhea" id="RHEA:52460"/>
        <dbReference type="ChEBI" id="CHEBI:15378"/>
        <dbReference type="ChEBI" id="CHEBI:16469"/>
        <dbReference type="ChEBI" id="CHEBI:58052"/>
        <dbReference type="ChEBI" id="CHEBI:58223"/>
        <dbReference type="ChEBI" id="CHEBI:136641"/>
    </reaction>
    <physiologicalReaction direction="left-to-right" evidence="1">
        <dbReference type="Rhea" id="RHEA:52461"/>
    </physiologicalReaction>
</comment>
<comment type="catalytic activity">
    <reaction evidence="1">
        <text>17beta-estradiol + UDP-alpha-D-glucuronate = 17beta-estradiol 17-O-(beta-D-glucuronate) + UDP + H(+)</text>
        <dbReference type="Rhea" id="RHEA:52464"/>
        <dbReference type="ChEBI" id="CHEBI:15378"/>
        <dbReference type="ChEBI" id="CHEBI:16469"/>
        <dbReference type="ChEBI" id="CHEBI:58052"/>
        <dbReference type="ChEBI" id="CHEBI:58223"/>
        <dbReference type="ChEBI" id="CHEBI:82961"/>
    </reaction>
    <physiologicalReaction direction="left-to-right" evidence="1">
        <dbReference type="Rhea" id="RHEA:52465"/>
    </physiologicalReaction>
</comment>
<comment type="catalytic activity">
    <reaction evidence="1">
        <text>testosterone + UDP-alpha-D-glucuronate = testosterone 17-O-(beta-D-glucuronate) + UDP + H(+)</text>
        <dbReference type="Rhea" id="RHEA:52456"/>
        <dbReference type="ChEBI" id="CHEBI:15378"/>
        <dbReference type="ChEBI" id="CHEBI:17347"/>
        <dbReference type="ChEBI" id="CHEBI:58052"/>
        <dbReference type="ChEBI" id="CHEBI:58223"/>
        <dbReference type="ChEBI" id="CHEBI:136639"/>
    </reaction>
    <physiologicalReaction direction="left-to-right" evidence="1">
        <dbReference type="Rhea" id="RHEA:52457"/>
    </physiologicalReaction>
</comment>
<comment type="catalytic activity">
    <reaction evidence="1">
        <text>epitestosterone + UDP-alpha-D-glucuronate = epitestosterone 17-O-(beta-D-glucuronate) + UDP + H(+)</text>
        <dbReference type="Rhea" id="RHEA:52568"/>
        <dbReference type="ChEBI" id="CHEBI:15378"/>
        <dbReference type="ChEBI" id="CHEBI:42534"/>
        <dbReference type="ChEBI" id="CHEBI:58052"/>
        <dbReference type="ChEBI" id="CHEBI:58223"/>
        <dbReference type="ChEBI" id="CHEBI:136673"/>
    </reaction>
    <physiologicalReaction direction="left-to-right" evidence="1">
        <dbReference type="Rhea" id="RHEA:52569"/>
    </physiologicalReaction>
</comment>
<comment type="catalytic activity">
    <reaction evidence="1">
        <text>lithocholate + UDP-alpha-D-glucuronate = lithocholoyl-3-O-(beta-D-glucuronate) + UDP + H(+)</text>
        <dbReference type="Rhea" id="RHEA:53028"/>
        <dbReference type="ChEBI" id="CHEBI:15378"/>
        <dbReference type="ChEBI" id="CHEBI:29744"/>
        <dbReference type="ChEBI" id="CHEBI:58052"/>
        <dbReference type="ChEBI" id="CHEBI:58223"/>
        <dbReference type="ChEBI" id="CHEBI:136965"/>
    </reaction>
    <physiologicalReaction direction="left-to-right" evidence="1">
        <dbReference type="Rhea" id="RHEA:53029"/>
    </physiologicalReaction>
</comment>
<comment type="catalytic activity">
    <reaction evidence="1">
        <text>lithocholate + UDP-alpha-D-glucuronate = lithocholoyl-24-O-(beta-D-glucuronate) + UDP</text>
        <dbReference type="Rhea" id="RHEA:52952"/>
        <dbReference type="ChEBI" id="CHEBI:29744"/>
        <dbReference type="ChEBI" id="CHEBI:58052"/>
        <dbReference type="ChEBI" id="CHEBI:58223"/>
        <dbReference type="ChEBI" id="CHEBI:136902"/>
    </reaction>
    <physiologicalReaction direction="left-to-right" evidence="1">
        <dbReference type="Rhea" id="RHEA:52953"/>
    </physiologicalReaction>
</comment>
<comment type="catalytic activity">
    <reaction evidence="1">
        <text>deoxycholate + UDP-alpha-D-glucuronate = deoxycholoyl-24-O-(beta-D-glucuronate) + UDP</text>
        <dbReference type="Rhea" id="RHEA:52948"/>
        <dbReference type="ChEBI" id="CHEBI:23614"/>
        <dbReference type="ChEBI" id="CHEBI:58052"/>
        <dbReference type="ChEBI" id="CHEBI:58223"/>
        <dbReference type="ChEBI" id="CHEBI:136901"/>
    </reaction>
    <physiologicalReaction direction="left-to-right" evidence="1">
        <dbReference type="Rhea" id="RHEA:52949"/>
    </physiologicalReaction>
</comment>
<comment type="catalytic activity">
    <reaction evidence="1">
        <text>hyodeoxycholate + UDP-alpha-D-glucuronate = hyodeoxycholate 6-O-(beta-D-glucuronate) + UDP + H(+)</text>
        <dbReference type="Rhea" id="RHEA:52964"/>
        <dbReference type="ChEBI" id="CHEBI:15378"/>
        <dbReference type="ChEBI" id="CHEBI:58052"/>
        <dbReference type="ChEBI" id="CHEBI:58223"/>
        <dbReference type="ChEBI" id="CHEBI:58875"/>
        <dbReference type="ChEBI" id="CHEBI:136905"/>
    </reaction>
    <physiologicalReaction direction="left-to-right" evidence="1">
        <dbReference type="Rhea" id="RHEA:52965"/>
    </physiologicalReaction>
</comment>
<comment type="catalytic activity">
    <reaction evidence="1">
        <text>hyocholate + UDP-alpha-D-glucuronate = hyocholoyl-24-O-(beta-D-glucuronate) + UDP</text>
        <dbReference type="Rhea" id="RHEA:52960"/>
        <dbReference type="ChEBI" id="CHEBI:58052"/>
        <dbReference type="ChEBI" id="CHEBI:58223"/>
        <dbReference type="ChEBI" id="CHEBI:133661"/>
        <dbReference type="ChEBI" id="CHEBI:136904"/>
    </reaction>
    <physiologicalReaction direction="left-to-right" evidence="1">
        <dbReference type="Rhea" id="RHEA:52961"/>
    </physiologicalReaction>
</comment>
<comment type="subcellular location">
    <subcellularLocation>
        <location evidence="1">Membrane</location>
        <topology evidence="3">Single-pass type I membrane protein</topology>
    </subcellularLocation>
</comment>
<comment type="similarity">
    <text evidence="4">Belongs to the UDP-glycosyltransferase family.</text>
</comment>
<proteinExistence type="evidence at transcript level"/>
<organism>
    <name type="scientific">Mus musculus</name>
    <name type="common">Mouse</name>
    <dbReference type="NCBI Taxonomy" id="10090"/>
    <lineage>
        <taxon>Eukaryota</taxon>
        <taxon>Metazoa</taxon>
        <taxon>Chordata</taxon>
        <taxon>Craniata</taxon>
        <taxon>Vertebrata</taxon>
        <taxon>Euteleostomi</taxon>
        <taxon>Mammalia</taxon>
        <taxon>Eutheria</taxon>
        <taxon>Euarchontoglires</taxon>
        <taxon>Glires</taxon>
        <taxon>Rodentia</taxon>
        <taxon>Myomorpha</taxon>
        <taxon>Muroidea</taxon>
        <taxon>Muridae</taxon>
        <taxon>Murinae</taxon>
        <taxon>Mus</taxon>
        <taxon>Mus</taxon>
    </lineage>
</organism>
<protein>
    <recommendedName>
        <fullName evidence="4">UDP-glucuronosyltransferase 2A1</fullName>
        <shortName>UDPGT 2A1</shortName>
        <shortName>UGT2A1</shortName>
        <ecNumber evidence="1">2.4.1.17</ecNumber>
    </recommendedName>
</protein>
<keyword id="KW-0325">Glycoprotein</keyword>
<keyword id="KW-0328">Glycosyltransferase</keyword>
<keyword id="KW-0443">Lipid metabolism</keyword>
<keyword id="KW-0472">Membrane</keyword>
<keyword id="KW-0552">Olfaction</keyword>
<keyword id="KW-1185">Reference proteome</keyword>
<keyword id="KW-0716">Sensory transduction</keyword>
<keyword id="KW-0732">Signal</keyword>
<keyword id="KW-0808">Transferase</keyword>
<keyword id="KW-0812">Transmembrane</keyword>
<keyword id="KW-1133">Transmembrane helix</keyword>
<reference key="1">
    <citation type="journal article" date="2001" name="Brain Res. Mol. Brain Res.">
        <title>Rat olfactory bulb and epithelium UDP-glucuronosyltransferase 2A1 (UGT2A1) expression: in situ mRNA localization and quantitative analysis.</title>
        <authorList>
            <person name="Heydel J.-M."/>
            <person name="Leclerc S."/>
            <person name="Bernard P."/>
            <person name="Pelczar H."/>
            <person name="Gradinaru D."/>
            <person name="Magdalou J."/>
            <person name="Minn A."/>
            <person name="Artur Y."/>
            <person name="Goudonnet H."/>
        </authorList>
    </citation>
    <scope>NUCLEOTIDE SEQUENCE [MRNA]</scope>
    <source>
        <strain>BALB/cJ</strain>
    </source>
</reference>
<reference key="2">
    <citation type="journal article" date="2005" name="Science">
        <title>The transcriptional landscape of the mammalian genome.</title>
        <authorList>
            <person name="Carninci P."/>
            <person name="Kasukawa T."/>
            <person name="Katayama S."/>
            <person name="Gough J."/>
            <person name="Frith M.C."/>
            <person name="Maeda N."/>
            <person name="Oyama R."/>
            <person name="Ravasi T."/>
            <person name="Lenhard B."/>
            <person name="Wells C."/>
            <person name="Kodzius R."/>
            <person name="Shimokawa K."/>
            <person name="Bajic V.B."/>
            <person name="Brenner S.E."/>
            <person name="Batalov S."/>
            <person name="Forrest A.R."/>
            <person name="Zavolan M."/>
            <person name="Davis M.J."/>
            <person name="Wilming L.G."/>
            <person name="Aidinis V."/>
            <person name="Allen J.E."/>
            <person name="Ambesi-Impiombato A."/>
            <person name="Apweiler R."/>
            <person name="Aturaliya R.N."/>
            <person name="Bailey T.L."/>
            <person name="Bansal M."/>
            <person name="Baxter L."/>
            <person name="Beisel K.W."/>
            <person name="Bersano T."/>
            <person name="Bono H."/>
            <person name="Chalk A.M."/>
            <person name="Chiu K.P."/>
            <person name="Choudhary V."/>
            <person name="Christoffels A."/>
            <person name="Clutterbuck D.R."/>
            <person name="Crowe M.L."/>
            <person name="Dalla E."/>
            <person name="Dalrymple B.P."/>
            <person name="de Bono B."/>
            <person name="Della Gatta G."/>
            <person name="di Bernardo D."/>
            <person name="Down T."/>
            <person name="Engstrom P."/>
            <person name="Fagiolini M."/>
            <person name="Faulkner G."/>
            <person name="Fletcher C.F."/>
            <person name="Fukushima T."/>
            <person name="Furuno M."/>
            <person name="Futaki S."/>
            <person name="Gariboldi M."/>
            <person name="Georgii-Hemming P."/>
            <person name="Gingeras T.R."/>
            <person name="Gojobori T."/>
            <person name="Green R.E."/>
            <person name="Gustincich S."/>
            <person name="Harbers M."/>
            <person name="Hayashi Y."/>
            <person name="Hensch T.K."/>
            <person name="Hirokawa N."/>
            <person name="Hill D."/>
            <person name="Huminiecki L."/>
            <person name="Iacono M."/>
            <person name="Ikeo K."/>
            <person name="Iwama A."/>
            <person name="Ishikawa T."/>
            <person name="Jakt M."/>
            <person name="Kanapin A."/>
            <person name="Katoh M."/>
            <person name="Kawasawa Y."/>
            <person name="Kelso J."/>
            <person name="Kitamura H."/>
            <person name="Kitano H."/>
            <person name="Kollias G."/>
            <person name="Krishnan S.P."/>
            <person name="Kruger A."/>
            <person name="Kummerfeld S.K."/>
            <person name="Kurochkin I.V."/>
            <person name="Lareau L.F."/>
            <person name="Lazarevic D."/>
            <person name="Lipovich L."/>
            <person name="Liu J."/>
            <person name="Liuni S."/>
            <person name="McWilliam S."/>
            <person name="Madan Babu M."/>
            <person name="Madera M."/>
            <person name="Marchionni L."/>
            <person name="Matsuda H."/>
            <person name="Matsuzawa S."/>
            <person name="Miki H."/>
            <person name="Mignone F."/>
            <person name="Miyake S."/>
            <person name="Morris K."/>
            <person name="Mottagui-Tabar S."/>
            <person name="Mulder N."/>
            <person name="Nakano N."/>
            <person name="Nakauchi H."/>
            <person name="Ng P."/>
            <person name="Nilsson R."/>
            <person name="Nishiguchi S."/>
            <person name="Nishikawa S."/>
            <person name="Nori F."/>
            <person name="Ohara O."/>
            <person name="Okazaki Y."/>
            <person name="Orlando V."/>
            <person name="Pang K.C."/>
            <person name="Pavan W.J."/>
            <person name="Pavesi G."/>
            <person name="Pesole G."/>
            <person name="Petrovsky N."/>
            <person name="Piazza S."/>
            <person name="Reed J."/>
            <person name="Reid J.F."/>
            <person name="Ring B.Z."/>
            <person name="Ringwald M."/>
            <person name="Rost B."/>
            <person name="Ruan Y."/>
            <person name="Salzberg S.L."/>
            <person name="Sandelin A."/>
            <person name="Schneider C."/>
            <person name="Schoenbach C."/>
            <person name="Sekiguchi K."/>
            <person name="Semple C.A."/>
            <person name="Seno S."/>
            <person name="Sessa L."/>
            <person name="Sheng Y."/>
            <person name="Shibata Y."/>
            <person name="Shimada H."/>
            <person name="Shimada K."/>
            <person name="Silva D."/>
            <person name="Sinclair B."/>
            <person name="Sperling S."/>
            <person name="Stupka E."/>
            <person name="Sugiura K."/>
            <person name="Sultana R."/>
            <person name="Takenaka Y."/>
            <person name="Taki K."/>
            <person name="Tammoja K."/>
            <person name="Tan S.L."/>
            <person name="Tang S."/>
            <person name="Taylor M.S."/>
            <person name="Tegner J."/>
            <person name="Teichmann S.A."/>
            <person name="Ueda H.R."/>
            <person name="van Nimwegen E."/>
            <person name="Verardo R."/>
            <person name="Wei C.L."/>
            <person name="Yagi K."/>
            <person name="Yamanishi H."/>
            <person name="Zabarovsky E."/>
            <person name="Zhu S."/>
            <person name="Zimmer A."/>
            <person name="Hide W."/>
            <person name="Bult C."/>
            <person name="Grimmond S.M."/>
            <person name="Teasdale R.D."/>
            <person name="Liu E.T."/>
            <person name="Brusic V."/>
            <person name="Quackenbush J."/>
            <person name="Wahlestedt C."/>
            <person name="Mattick J.S."/>
            <person name="Hume D.A."/>
            <person name="Kai C."/>
            <person name="Sasaki D."/>
            <person name="Tomaru Y."/>
            <person name="Fukuda S."/>
            <person name="Kanamori-Katayama M."/>
            <person name="Suzuki M."/>
            <person name="Aoki J."/>
            <person name="Arakawa T."/>
            <person name="Iida J."/>
            <person name="Imamura K."/>
            <person name="Itoh M."/>
            <person name="Kato T."/>
            <person name="Kawaji H."/>
            <person name="Kawagashira N."/>
            <person name="Kawashima T."/>
            <person name="Kojima M."/>
            <person name="Kondo S."/>
            <person name="Konno H."/>
            <person name="Nakano K."/>
            <person name="Ninomiya N."/>
            <person name="Nishio T."/>
            <person name="Okada M."/>
            <person name="Plessy C."/>
            <person name="Shibata K."/>
            <person name="Shiraki T."/>
            <person name="Suzuki S."/>
            <person name="Tagami M."/>
            <person name="Waki K."/>
            <person name="Watahiki A."/>
            <person name="Okamura-Oho Y."/>
            <person name="Suzuki H."/>
            <person name="Kawai J."/>
            <person name="Hayashizaki Y."/>
        </authorList>
    </citation>
    <scope>NUCLEOTIDE SEQUENCE [LARGE SCALE MRNA]</scope>
    <source>
        <strain>C57BL/6J</strain>
        <tissue>Head</tissue>
    </source>
</reference>
<reference key="3">
    <citation type="journal article" date="2004" name="Genome Res.">
        <title>The status, quality, and expansion of the NIH full-length cDNA project: the Mammalian Gene Collection (MGC).</title>
        <authorList>
            <consortium name="The MGC Project Team"/>
        </authorList>
    </citation>
    <scope>NUCLEOTIDE SEQUENCE [LARGE SCALE MRNA]</scope>
    <source>
        <tissue>Olfactory epithelium</tissue>
    </source>
</reference>
<evidence type="ECO:0000250" key="1">
    <source>
        <dbReference type="UniProtKB" id="P0DTE4"/>
    </source>
</evidence>
<evidence type="ECO:0000250" key="2">
    <source>
        <dbReference type="UniProtKB" id="Q8BWQ1"/>
    </source>
</evidence>
<evidence type="ECO:0000255" key="3"/>
<evidence type="ECO:0000305" key="4"/>
<evidence type="ECO:0000312" key="5">
    <source>
        <dbReference type="MGI" id="MGI:2149905"/>
    </source>
</evidence>
<sequence>MLKNILLCSLQISLLGMSLGGNVLIWPMEGSHWLNVKIIIDELLRKEHNVTVLVASGALFITPSSISPSLTFEIYPVPFGKEKIESVIKDFVLTWLENRPSPSTIWTFYKEMAKVIEEFHLVSRGICDGVLKNEKLMSKLQKEKFEVLLSDPVFPCGDIVALKLGIPFIYSLRFSPASTVEKHCGKVPFPPSYVPAILSELTDQMSFTDRVRNFISYRMQDYMFETLWKQWDSYYTKALGRPTTLCETMGKAEIWLMRTYWDFEFPRPYLPNFEFVGGLHCKPAKPLPKEMEEFVQTSGEHGIVVFSLGSMVKNLTDEKANLIASALAQIPQKVLWRYKGKIPDTLGSNTRLFDWIPQNDLLGHPKTRAFITHGGTNGIYEAIYHGIPMVGVPMFADQPDNIAHMKAKGAAVEVNMNTMTSSDLLNALRTVINEPSYKENAMRLSRIHHDQPVKPLDRAVFWIEFVMRHKGAKHLRVAAHDLSWFQYHSLDVIGFLLACVASAILLVAKCCLFIFQKVGKTGKKKKRD</sequence>
<accession>Q80X89</accession>
<accession>Q9ESE4</accession>
<dbReference type="EC" id="2.4.1.17" evidence="1"/>
<dbReference type="EMBL" id="AF184901">
    <property type="protein sequence ID" value="AAG17003.1"/>
    <property type="molecule type" value="mRNA"/>
</dbReference>
<dbReference type="EMBL" id="AK140757">
    <property type="protein sequence ID" value="BAE24468.1"/>
    <property type="molecule type" value="mRNA"/>
</dbReference>
<dbReference type="EMBL" id="BC048926">
    <property type="protein sequence ID" value="AAH48926.1"/>
    <property type="molecule type" value="mRNA"/>
</dbReference>
<dbReference type="CCDS" id="CCDS39129.1"/>
<dbReference type="RefSeq" id="NP_444414.2">
    <property type="nucleotide sequence ID" value="NM_053184.2"/>
</dbReference>
<dbReference type="SMR" id="Q80X89"/>
<dbReference type="FunCoup" id="Q80X89">
    <property type="interactions" value="372"/>
</dbReference>
<dbReference type="STRING" id="10090.ENSMUSP00000114583"/>
<dbReference type="CAZy" id="GT1">
    <property type="family name" value="Glycosyltransferase Family 1"/>
</dbReference>
<dbReference type="GlyCosmos" id="Q80X89">
    <property type="glycosylation" value="2 sites, No reported glycans"/>
</dbReference>
<dbReference type="GlyGen" id="Q80X89">
    <property type="glycosylation" value="2 sites"/>
</dbReference>
<dbReference type="iPTMnet" id="Q80X89"/>
<dbReference type="PhosphoSitePlus" id="Q80X89"/>
<dbReference type="jPOST" id="Q80X89"/>
<dbReference type="PaxDb" id="10090-ENSMUSP00000114583"/>
<dbReference type="ProteomicsDB" id="298193"/>
<dbReference type="DNASU" id="94215"/>
<dbReference type="Ensembl" id="ENSMUST00000147854.6">
    <property type="protein sequence ID" value="ENSMUSP00000114583.2"/>
    <property type="gene ID" value="ENSMUSG00000106677.2"/>
</dbReference>
<dbReference type="GeneID" id="94215"/>
<dbReference type="KEGG" id="mmu:94215"/>
<dbReference type="UCSC" id="uc008xyl.2">
    <property type="organism name" value="mouse"/>
</dbReference>
<dbReference type="AGR" id="MGI:2149905"/>
<dbReference type="CTD" id="10941"/>
<dbReference type="MGI" id="MGI:2149905">
    <property type="gene designation" value="Ugt2a1"/>
</dbReference>
<dbReference type="VEuPathDB" id="HostDB:ENSMUSG00000106677"/>
<dbReference type="eggNOG" id="KOG1192">
    <property type="taxonomic scope" value="Eukaryota"/>
</dbReference>
<dbReference type="GeneTree" id="ENSGT00940000161344"/>
<dbReference type="HOGENOM" id="CLU_012949_3_0_1"/>
<dbReference type="InParanoid" id="Q80X89"/>
<dbReference type="OMA" id="HFGIYEM"/>
<dbReference type="OrthoDB" id="5835829at2759"/>
<dbReference type="PhylomeDB" id="Q80X89"/>
<dbReference type="Reactome" id="R-MMU-156588">
    <property type="pathway name" value="Glucuronidation"/>
</dbReference>
<dbReference type="Reactome" id="R-MMU-9749641">
    <property type="pathway name" value="Aspirin ADME"/>
</dbReference>
<dbReference type="BioGRID-ORCS" id="94215">
    <property type="hits" value="0 hits in 26 CRISPR screens"/>
</dbReference>
<dbReference type="PRO" id="PR:Q80X89"/>
<dbReference type="Proteomes" id="UP000000589">
    <property type="component" value="Chromosome 5"/>
</dbReference>
<dbReference type="RNAct" id="Q80X89">
    <property type="molecule type" value="protein"/>
</dbReference>
<dbReference type="Bgee" id="ENSMUSG00000106677">
    <property type="expression patterns" value="Expressed in respiratory tract epithelium and 8 other cell types or tissues"/>
</dbReference>
<dbReference type="GO" id="GO:0016020">
    <property type="term" value="C:membrane"/>
    <property type="evidence" value="ECO:0007669"/>
    <property type="project" value="UniProtKB-SubCell"/>
</dbReference>
<dbReference type="GO" id="GO:0015020">
    <property type="term" value="F:glucuronosyltransferase activity"/>
    <property type="evidence" value="ECO:0000247"/>
    <property type="project" value="MGI"/>
</dbReference>
<dbReference type="GO" id="GO:0008206">
    <property type="term" value="P:bile acid metabolic process"/>
    <property type="evidence" value="ECO:0007669"/>
    <property type="project" value="Ensembl"/>
</dbReference>
<dbReference type="GO" id="GO:0009608">
    <property type="term" value="P:response to symbiont"/>
    <property type="evidence" value="ECO:0007669"/>
    <property type="project" value="Ensembl"/>
</dbReference>
<dbReference type="GO" id="GO:0007608">
    <property type="term" value="P:sensory perception of smell"/>
    <property type="evidence" value="ECO:0007669"/>
    <property type="project" value="UniProtKB-KW"/>
</dbReference>
<dbReference type="GO" id="GO:0006805">
    <property type="term" value="P:xenobiotic metabolic process"/>
    <property type="evidence" value="ECO:0007669"/>
    <property type="project" value="Ensembl"/>
</dbReference>
<dbReference type="CDD" id="cd03784">
    <property type="entry name" value="GT1_Gtf-like"/>
    <property type="match status" value="1"/>
</dbReference>
<dbReference type="FunFam" id="3.40.50.2000:FF:000001">
    <property type="entry name" value="UDP-glucuronosyltransferase"/>
    <property type="match status" value="1"/>
</dbReference>
<dbReference type="FunFam" id="3.40.50.2000:FF:000081">
    <property type="entry name" value="UDP-glucuronosyltransferase 2A2"/>
    <property type="match status" value="1"/>
</dbReference>
<dbReference type="Gene3D" id="3.40.50.2000">
    <property type="entry name" value="Glycogen Phosphorylase B"/>
    <property type="match status" value="2"/>
</dbReference>
<dbReference type="InterPro" id="IPR050271">
    <property type="entry name" value="UDP-glycosyltransferase"/>
</dbReference>
<dbReference type="InterPro" id="IPR002213">
    <property type="entry name" value="UDP_glucos_trans"/>
</dbReference>
<dbReference type="InterPro" id="IPR035595">
    <property type="entry name" value="UDP_glycos_trans_CS"/>
</dbReference>
<dbReference type="PANTHER" id="PTHR48043">
    <property type="entry name" value="EG:EG0003.4 PROTEIN-RELATED"/>
    <property type="match status" value="1"/>
</dbReference>
<dbReference type="PANTHER" id="PTHR48043:SF140">
    <property type="entry name" value="UDP-GLUCURONOSYLTRANSFERASE 2A1"/>
    <property type="match status" value="1"/>
</dbReference>
<dbReference type="Pfam" id="PF00201">
    <property type="entry name" value="UDPGT"/>
    <property type="match status" value="1"/>
</dbReference>
<dbReference type="SUPFAM" id="SSF53756">
    <property type="entry name" value="UDP-Glycosyltransferase/glycogen phosphorylase"/>
    <property type="match status" value="1"/>
</dbReference>
<dbReference type="PROSITE" id="PS00375">
    <property type="entry name" value="UDPGT"/>
    <property type="match status" value="1"/>
</dbReference>
<gene>
    <name evidence="5" type="primary">Ugt2a1</name>
</gene>
<feature type="signal peptide" evidence="3">
    <location>
        <begin position="1"/>
        <end position="21"/>
    </location>
</feature>
<feature type="chain" id="PRO_0000299143" description="UDP-glucuronosyltransferase 2A1">
    <location>
        <begin position="22"/>
        <end position="528"/>
    </location>
</feature>
<feature type="topological domain" description="Extracellular" evidence="3">
    <location>
        <begin position="22"/>
        <end position="494"/>
    </location>
</feature>
<feature type="transmembrane region" description="Helical" evidence="3">
    <location>
        <begin position="495"/>
        <end position="515"/>
    </location>
</feature>
<feature type="topological domain" description="Cytoplasmic" evidence="3">
    <location>
        <begin position="516"/>
        <end position="528"/>
    </location>
</feature>
<feature type="modified residue" description="N6-succinyllysine" evidence="2">
    <location>
        <position position="135"/>
    </location>
</feature>
<feature type="glycosylation site" description="N-linked (GlcNAc...) asparagine" evidence="3">
    <location>
        <position position="49"/>
    </location>
</feature>
<feature type="glycosylation site" description="N-linked (GlcNAc...) asparagine" evidence="3">
    <location>
        <position position="314"/>
    </location>
</feature>
<feature type="sequence conflict" description="In Ref. 1; AAG17003." evidence="4" ref="1">
    <location>
        <position position="64"/>
    </location>
</feature>
<feature type="sequence conflict" description="In Ref. 1; AAG17003." evidence="4" ref="1">
    <original>T</original>
    <variation>A</variation>
    <location>
        <position position="208"/>
    </location>
</feature>
<feature type="sequence conflict" description="In Ref. 1; AAG17003." evidence="4" ref="1">
    <original>G</original>
    <variation>R</variation>
    <location>
        <position position="522"/>
    </location>
</feature>
<feature type="sequence conflict" description="In Ref. 1; AAG17003." evidence="4" ref="1">
    <original>R</original>
    <variation>S</variation>
    <location>
        <position position="527"/>
    </location>
</feature>
<name>UD2A1_MOUSE</name>